<name>CBIA_CLOAB</name>
<protein>
    <recommendedName>
        <fullName evidence="1">Cobyrinate a,c-diamide synthase</fullName>
        <ecNumber evidence="1">6.3.5.11</ecNumber>
    </recommendedName>
    <alternativeName>
        <fullName evidence="1">Cobyrinic acid a,c-diamide synthetase</fullName>
    </alternativeName>
</protein>
<proteinExistence type="inferred from homology"/>
<reference key="1">
    <citation type="journal article" date="2001" name="J. Bacteriol.">
        <title>Genome sequence and comparative analysis of the solvent-producing bacterium Clostridium acetobutylicum.</title>
        <authorList>
            <person name="Noelling J."/>
            <person name="Breton G."/>
            <person name="Omelchenko M.V."/>
            <person name="Makarova K.S."/>
            <person name="Zeng Q."/>
            <person name="Gibson R."/>
            <person name="Lee H.M."/>
            <person name="Dubois J."/>
            <person name="Qiu D."/>
            <person name="Hitti J."/>
            <person name="Wolf Y.I."/>
            <person name="Tatusov R.L."/>
            <person name="Sabathe F."/>
            <person name="Doucette-Stamm L.A."/>
            <person name="Soucaille P."/>
            <person name="Daly M.J."/>
            <person name="Bennett G.N."/>
            <person name="Koonin E.V."/>
            <person name="Smith D.R."/>
        </authorList>
    </citation>
    <scope>NUCLEOTIDE SEQUENCE [LARGE SCALE GENOMIC DNA]</scope>
    <source>
        <strain>ATCC 824 / DSM 792 / JCM 1419 / IAM 19013 / LMG 5710 / NBRC 13948 / NRRL B-527 / VKM B-1787 / 2291 / W</strain>
    </source>
</reference>
<organism>
    <name type="scientific">Clostridium acetobutylicum (strain ATCC 824 / DSM 792 / JCM 1419 / IAM 19013 / LMG 5710 / NBRC 13948 / NRRL B-527 / VKM B-1787 / 2291 / W)</name>
    <dbReference type="NCBI Taxonomy" id="272562"/>
    <lineage>
        <taxon>Bacteria</taxon>
        <taxon>Bacillati</taxon>
        <taxon>Bacillota</taxon>
        <taxon>Clostridia</taxon>
        <taxon>Eubacteriales</taxon>
        <taxon>Clostridiaceae</taxon>
        <taxon>Clostridium</taxon>
    </lineage>
</organism>
<gene>
    <name evidence="1" type="primary">cbiA</name>
    <name type="synonym">cobB</name>
    <name type="ordered locus">CA_C1375</name>
</gene>
<dbReference type="EC" id="6.3.5.11" evidence="1"/>
<dbReference type="EMBL" id="AE001437">
    <property type="protein sequence ID" value="AAK79343.1"/>
    <property type="molecule type" value="Genomic_DNA"/>
</dbReference>
<dbReference type="PIR" id="D97069">
    <property type="entry name" value="D97069"/>
</dbReference>
<dbReference type="RefSeq" id="NP_348003.1">
    <property type="nucleotide sequence ID" value="NC_003030.1"/>
</dbReference>
<dbReference type="RefSeq" id="WP_010964684.1">
    <property type="nucleotide sequence ID" value="NC_003030.1"/>
</dbReference>
<dbReference type="SMR" id="Q97JB1"/>
<dbReference type="STRING" id="272562.CA_C1375"/>
<dbReference type="KEGG" id="cac:CA_C1375"/>
<dbReference type="PATRIC" id="fig|272562.8.peg.1580"/>
<dbReference type="eggNOG" id="COG1797">
    <property type="taxonomic scope" value="Bacteria"/>
</dbReference>
<dbReference type="HOGENOM" id="CLU_022752_2_0_9"/>
<dbReference type="OrthoDB" id="9764035at2"/>
<dbReference type="UniPathway" id="UPA00148">
    <property type="reaction ID" value="UER00231"/>
</dbReference>
<dbReference type="Proteomes" id="UP000000814">
    <property type="component" value="Chromosome"/>
</dbReference>
<dbReference type="GO" id="GO:0005524">
    <property type="term" value="F:ATP binding"/>
    <property type="evidence" value="ECO:0007669"/>
    <property type="project" value="UniProtKB-UniRule"/>
</dbReference>
<dbReference type="GO" id="GO:0042242">
    <property type="term" value="F:cobyrinic acid a,c-diamide synthase activity"/>
    <property type="evidence" value="ECO:0007669"/>
    <property type="project" value="UniProtKB-UniRule"/>
</dbReference>
<dbReference type="GO" id="GO:0009236">
    <property type="term" value="P:cobalamin biosynthetic process"/>
    <property type="evidence" value="ECO:0007669"/>
    <property type="project" value="UniProtKB-UniRule"/>
</dbReference>
<dbReference type="CDD" id="cd05388">
    <property type="entry name" value="CobB_N"/>
    <property type="match status" value="1"/>
</dbReference>
<dbReference type="CDD" id="cd03130">
    <property type="entry name" value="GATase1_CobB"/>
    <property type="match status" value="1"/>
</dbReference>
<dbReference type="Gene3D" id="3.40.50.880">
    <property type="match status" value="1"/>
</dbReference>
<dbReference type="Gene3D" id="3.40.50.300">
    <property type="entry name" value="P-loop containing nucleotide triphosphate hydrolases"/>
    <property type="match status" value="1"/>
</dbReference>
<dbReference type="HAMAP" id="MF_00027">
    <property type="entry name" value="CobB_CbiA"/>
    <property type="match status" value="1"/>
</dbReference>
<dbReference type="InterPro" id="IPR004484">
    <property type="entry name" value="CbiA/CobB_synth"/>
</dbReference>
<dbReference type="InterPro" id="IPR029062">
    <property type="entry name" value="Class_I_gatase-like"/>
</dbReference>
<dbReference type="InterPro" id="IPR002586">
    <property type="entry name" value="CobQ/CobB/MinD/ParA_Nub-bd_dom"/>
</dbReference>
<dbReference type="InterPro" id="IPR011698">
    <property type="entry name" value="GATase_3"/>
</dbReference>
<dbReference type="InterPro" id="IPR027417">
    <property type="entry name" value="P-loop_NTPase"/>
</dbReference>
<dbReference type="NCBIfam" id="TIGR00379">
    <property type="entry name" value="cobB"/>
    <property type="match status" value="1"/>
</dbReference>
<dbReference type="NCBIfam" id="NF002204">
    <property type="entry name" value="PRK01077.1"/>
    <property type="match status" value="1"/>
</dbReference>
<dbReference type="PANTHER" id="PTHR43873">
    <property type="entry name" value="COBYRINATE A,C-DIAMIDE SYNTHASE"/>
    <property type="match status" value="1"/>
</dbReference>
<dbReference type="PANTHER" id="PTHR43873:SF1">
    <property type="entry name" value="COBYRINATE A,C-DIAMIDE SYNTHASE"/>
    <property type="match status" value="1"/>
</dbReference>
<dbReference type="Pfam" id="PF01656">
    <property type="entry name" value="CbiA"/>
    <property type="match status" value="1"/>
</dbReference>
<dbReference type="Pfam" id="PF07685">
    <property type="entry name" value="GATase_3"/>
    <property type="match status" value="1"/>
</dbReference>
<dbReference type="SUPFAM" id="SSF52317">
    <property type="entry name" value="Class I glutamine amidotransferase-like"/>
    <property type="match status" value="1"/>
</dbReference>
<dbReference type="SUPFAM" id="SSF52540">
    <property type="entry name" value="P-loop containing nucleoside triphosphate hydrolases"/>
    <property type="match status" value="1"/>
</dbReference>
<dbReference type="PROSITE" id="PS51274">
    <property type="entry name" value="GATASE_COBBQ"/>
    <property type="match status" value="1"/>
</dbReference>
<keyword id="KW-0067">ATP-binding</keyword>
<keyword id="KW-0169">Cobalamin biosynthesis</keyword>
<keyword id="KW-0315">Glutamine amidotransferase</keyword>
<keyword id="KW-0436">Ligase</keyword>
<keyword id="KW-0460">Magnesium</keyword>
<keyword id="KW-0547">Nucleotide-binding</keyword>
<keyword id="KW-1185">Reference proteome</keyword>
<comment type="function">
    <text evidence="1">Catalyzes the ATP-dependent amidation of the two carboxylate groups at positions a and c of cobyrinate, using either L-glutamine or ammonia as the nitrogen source.</text>
</comment>
<comment type="catalytic activity">
    <reaction evidence="1">
        <text>cob(II)yrinate + 2 L-glutamine + 2 ATP + 2 H2O = cob(II)yrinate a,c diamide + 2 L-glutamate + 2 ADP + 2 phosphate + 2 H(+)</text>
        <dbReference type="Rhea" id="RHEA:26289"/>
        <dbReference type="ChEBI" id="CHEBI:15377"/>
        <dbReference type="ChEBI" id="CHEBI:15378"/>
        <dbReference type="ChEBI" id="CHEBI:29985"/>
        <dbReference type="ChEBI" id="CHEBI:30616"/>
        <dbReference type="ChEBI" id="CHEBI:43474"/>
        <dbReference type="ChEBI" id="CHEBI:58359"/>
        <dbReference type="ChEBI" id="CHEBI:58537"/>
        <dbReference type="ChEBI" id="CHEBI:58894"/>
        <dbReference type="ChEBI" id="CHEBI:456216"/>
        <dbReference type="EC" id="6.3.5.11"/>
    </reaction>
</comment>
<comment type="cofactor">
    <cofactor evidence="1">
        <name>Mg(2+)</name>
        <dbReference type="ChEBI" id="CHEBI:18420"/>
    </cofactor>
</comment>
<comment type="pathway">
    <text evidence="1">Cofactor biosynthesis; adenosylcobalamin biosynthesis; cob(II)yrinate a,c-diamide from sirohydrochlorin (anaerobic route): step 10/10.</text>
</comment>
<comment type="domain">
    <text evidence="1">Comprises of two domains. The C-terminal domain contains the binding site for glutamine and catalyzes the hydrolysis of this substrate to glutamate and ammonia. The N-terminal domain is anticipated to bind ATP and cobyrinate and catalyzes the ultimate synthesis of the diamide product. The ammonia produced via the glutaminase domain is probably translocated to the adjacent domain via a molecular tunnel, where it reacts with an activated intermediate.</text>
</comment>
<comment type="miscellaneous">
    <text evidence="1">The a and c carboxylates of cobyrinate are activated for nucleophilic attack via formation of a phosphorylated intermediate by ATP. CbiA catalyzes first the amidation of the c-carboxylate, and then that of the a-carboxylate.</text>
</comment>
<comment type="similarity">
    <text evidence="1">Belongs to the CobB/CbiA family.</text>
</comment>
<sequence>MRSIIIASNSSGGGKTTVTLGLMKALVSRGLEVQGFKVGPDYIDTAFHESVTGKLSRNLDLFLMGEDGVKASFARGNGDYGIIEGVMGLYDGRGVTSEYSTAHLSKILKLPIVLVLTPKAQSLTLCAEIEGIVNFDSDINIVGVILNNISEGYYNLLRIAIEEHFKGKIKVFGYLPKNEALSLKSRHLGLVQSVEINTLNEKLEKCSELLENHVKVDELLKYFSKTSDFKDDYHLKNKNLKIAVAKDEAFNFYYKENLELLHELGEVTYFSPLKDKKLPENIDFLYIGGGYPEIFKDALSENKDMLLEIKNKLEDGTRCYAECGGLMYLMEAIEGSSMVGFFKGSSYMGKRLQNFGYAEVTVSKENRLLPLNIKINCHEFHKSYVNTEEETIYSVTKYTYLGENKSWRCGYTKKNVLAAYAHVHFFGNLDFLKHLVR</sequence>
<evidence type="ECO:0000255" key="1">
    <source>
        <dbReference type="HAMAP-Rule" id="MF_00027"/>
    </source>
</evidence>
<feature type="chain" id="PRO_1000057223" description="Cobyrinate a,c-diamide synthase">
    <location>
        <begin position="1"/>
        <end position="437"/>
    </location>
</feature>
<feature type="domain" description="GATase cobBQ-type" evidence="1">
    <location>
        <begin position="241"/>
        <end position="430"/>
    </location>
</feature>
<feature type="active site" description="Nucleophile" evidence="1">
    <location>
        <position position="323"/>
    </location>
</feature>
<feature type="site" description="Increases nucleophilicity of active site Cys" evidence="1">
    <location>
        <position position="422"/>
    </location>
</feature>
<accession>Q97JB1</accession>